<comment type="function">
    <text evidence="1">Nucleotidyltransferase involved in the post-translational modification of proteins. It can catalyze the addition of adenosine monophosphate (AMP) or uridine monophosphate (UMP) to a protein, resulting in modifications known as AMPylation and UMPylation.</text>
</comment>
<comment type="catalytic activity">
    <reaction evidence="1">
        <text>L-seryl-[protein] + ATP = 3-O-(5'-adenylyl)-L-seryl-[protein] + diphosphate</text>
        <dbReference type="Rhea" id="RHEA:58120"/>
        <dbReference type="Rhea" id="RHEA-COMP:9863"/>
        <dbReference type="Rhea" id="RHEA-COMP:15073"/>
        <dbReference type="ChEBI" id="CHEBI:29999"/>
        <dbReference type="ChEBI" id="CHEBI:30616"/>
        <dbReference type="ChEBI" id="CHEBI:33019"/>
        <dbReference type="ChEBI" id="CHEBI:142516"/>
        <dbReference type="EC" id="2.7.7.108"/>
    </reaction>
</comment>
<comment type="catalytic activity">
    <reaction evidence="1">
        <text>L-threonyl-[protein] + ATP = 3-O-(5'-adenylyl)-L-threonyl-[protein] + diphosphate</text>
        <dbReference type="Rhea" id="RHEA:54292"/>
        <dbReference type="Rhea" id="RHEA-COMP:11060"/>
        <dbReference type="Rhea" id="RHEA-COMP:13847"/>
        <dbReference type="ChEBI" id="CHEBI:30013"/>
        <dbReference type="ChEBI" id="CHEBI:30616"/>
        <dbReference type="ChEBI" id="CHEBI:33019"/>
        <dbReference type="ChEBI" id="CHEBI:138113"/>
        <dbReference type="EC" id="2.7.7.108"/>
    </reaction>
</comment>
<comment type="catalytic activity">
    <reaction evidence="1">
        <text>L-tyrosyl-[protein] + ATP = O-(5'-adenylyl)-L-tyrosyl-[protein] + diphosphate</text>
        <dbReference type="Rhea" id="RHEA:54288"/>
        <dbReference type="Rhea" id="RHEA-COMP:10136"/>
        <dbReference type="Rhea" id="RHEA-COMP:13846"/>
        <dbReference type="ChEBI" id="CHEBI:30616"/>
        <dbReference type="ChEBI" id="CHEBI:33019"/>
        <dbReference type="ChEBI" id="CHEBI:46858"/>
        <dbReference type="ChEBI" id="CHEBI:83624"/>
        <dbReference type="EC" id="2.7.7.108"/>
    </reaction>
</comment>
<comment type="catalytic activity">
    <reaction evidence="1">
        <text>L-histidyl-[protein] + UTP = N(tele)-(5'-uridylyl)-L-histidyl-[protein] + diphosphate</text>
        <dbReference type="Rhea" id="RHEA:83891"/>
        <dbReference type="Rhea" id="RHEA-COMP:9745"/>
        <dbReference type="Rhea" id="RHEA-COMP:20239"/>
        <dbReference type="ChEBI" id="CHEBI:29979"/>
        <dbReference type="ChEBI" id="CHEBI:33019"/>
        <dbReference type="ChEBI" id="CHEBI:46398"/>
        <dbReference type="ChEBI" id="CHEBI:233474"/>
    </reaction>
</comment>
<comment type="catalytic activity">
    <reaction evidence="1">
        <text>L-seryl-[protein] + UTP = O-(5'-uridylyl)-L-seryl-[protein] + diphosphate</text>
        <dbReference type="Rhea" id="RHEA:64604"/>
        <dbReference type="Rhea" id="RHEA-COMP:9863"/>
        <dbReference type="Rhea" id="RHEA-COMP:16635"/>
        <dbReference type="ChEBI" id="CHEBI:29999"/>
        <dbReference type="ChEBI" id="CHEBI:33019"/>
        <dbReference type="ChEBI" id="CHEBI:46398"/>
        <dbReference type="ChEBI" id="CHEBI:156051"/>
    </reaction>
</comment>
<comment type="catalytic activity">
    <reaction evidence="1">
        <text>L-tyrosyl-[protein] + UTP = O-(5'-uridylyl)-L-tyrosyl-[protein] + diphosphate</text>
        <dbReference type="Rhea" id="RHEA:83887"/>
        <dbReference type="Rhea" id="RHEA-COMP:10136"/>
        <dbReference type="Rhea" id="RHEA-COMP:20238"/>
        <dbReference type="ChEBI" id="CHEBI:33019"/>
        <dbReference type="ChEBI" id="CHEBI:46398"/>
        <dbReference type="ChEBI" id="CHEBI:46858"/>
        <dbReference type="ChEBI" id="CHEBI:90602"/>
    </reaction>
</comment>
<comment type="cofactor">
    <cofactor evidence="1">
        <name>Mg(2+)</name>
        <dbReference type="ChEBI" id="CHEBI:18420"/>
    </cofactor>
    <cofactor evidence="1">
        <name>Mn(2+)</name>
        <dbReference type="ChEBI" id="CHEBI:29035"/>
    </cofactor>
</comment>
<comment type="similarity">
    <text evidence="1">Belongs to the SELO family.</text>
</comment>
<feature type="chain" id="PRO_0000121408" description="Protein nucleotidyltransferase YdiU">
    <location>
        <begin position="1"/>
        <end position="495"/>
    </location>
</feature>
<feature type="active site" description="Proton acceptor" evidence="1">
    <location>
        <position position="261"/>
    </location>
</feature>
<feature type="binding site" evidence="1">
    <location>
        <position position="92"/>
    </location>
    <ligand>
        <name>ATP</name>
        <dbReference type="ChEBI" id="CHEBI:30616"/>
    </ligand>
</feature>
<feature type="binding site" evidence="1">
    <location>
        <position position="94"/>
    </location>
    <ligand>
        <name>ATP</name>
        <dbReference type="ChEBI" id="CHEBI:30616"/>
    </ligand>
</feature>
<feature type="binding site" evidence="1">
    <location>
        <position position="95"/>
    </location>
    <ligand>
        <name>ATP</name>
        <dbReference type="ChEBI" id="CHEBI:30616"/>
    </ligand>
</feature>
<feature type="binding site" evidence="1">
    <location>
        <position position="114"/>
    </location>
    <ligand>
        <name>ATP</name>
        <dbReference type="ChEBI" id="CHEBI:30616"/>
    </ligand>
</feature>
<feature type="binding site" evidence="1">
    <location>
        <position position="126"/>
    </location>
    <ligand>
        <name>ATP</name>
        <dbReference type="ChEBI" id="CHEBI:30616"/>
    </ligand>
</feature>
<feature type="binding site" evidence="1">
    <location>
        <position position="127"/>
    </location>
    <ligand>
        <name>ATP</name>
        <dbReference type="ChEBI" id="CHEBI:30616"/>
    </ligand>
</feature>
<feature type="binding site" evidence="1">
    <location>
        <position position="177"/>
    </location>
    <ligand>
        <name>ATP</name>
        <dbReference type="ChEBI" id="CHEBI:30616"/>
    </ligand>
</feature>
<feature type="binding site" evidence="1">
    <location>
        <position position="184"/>
    </location>
    <ligand>
        <name>ATP</name>
        <dbReference type="ChEBI" id="CHEBI:30616"/>
    </ligand>
</feature>
<feature type="binding site" evidence="1">
    <location>
        <position position="262"/>
    </location>
    <ligand>
        <name>Mg(2+)</name>
        <dbReference type="ChEBI" id="CHEBI:18420"/>
    </ligand>
</feature>
<feature type="binding site" evidence="1">
    <location>
        <position position="271"/>
    </location>
    <ligand>
        <name>ATP</name>
        <dbReference type="ChEBI" id="CHEBI:30616"/>
    </ligand>
</feature>
<feature type="binding site" evidence="1">
    <location>
        <position position="271"/>
    </location>
    <ligand>
        <name>Mg(2+)</name>
        <dbReference type="ChEBI" id="CHEBI:18420"/>
    </ligand>
</feature>
<dbReference type="EC" id="2.7.7.-" evidence="1"/>
<dbReference type="EC" id="2.7.7.108" evidence="1"/>
<dbReference type="EMBL" id="BX640443">
    <property type="protein sequence ID" value="CAE32603.1"/>
    <property type="molecule type" value="Genomic_DNA"/>
</dbReference>
<dbReference type="RefSeq" id="WP_003812698.1">
    <property type="nucleotide sequence ID" value="NC_002927.3"/>
</dbReference>
<dbReference type="SMR" id="Q7WKJ9"/>
<dbReference type="KEGG" id="bbr:BB2107"/>
<dbReference type="eggNOG" id="COG0397">
    <property type="taxonomic scope" value="Bacteria"/>
</dbReference>
<dbReference type="HOGENOM" id="CLU_010245_4_0_4"/>
<dbReference type="Proteomes" id="UP000001027">
    <property type="component" value="Chromosome"/>
</dbReference>
<dbReference type="GO" id="GO:0070733">
    <property type="term" value="F:AMPylase activity"/>
    <property type="evidence" value="ECO:0007669"/>
    <property type="project" value="RHEA"/>
</dbReference>
<dbReference type="GO" id="GO:0005524">
    <property type="term" value="F:ATP binding"/>
    <property type="evidence" value="ECO:0007669"/>
    <property type="project" value="UniProtKB-UniRule"/>
</dbReference>
<dbReference type="GO" id="GO:0000287">
    <property type="term" value="F:magnesium ion binding"/>
    <property type="evidence" value="ECO:0007669"/>
    <property type="project" value="UniProtKB-UniRule"/>
</dbReference>
<dbReference type="HAMAP" id="MF_00692">
    <property type="entry name" value="YdiU_SelO"/>
    <property type="match status" value="1"/>
</dbReference>
<dbReference type="InterPro" id="IPR003846">
    <property type="entry name" value="SelO"/>
</dbReference>
<dbReference type="NCBIfam" id="NF000658">
    <property type="entry name" value="PRK00029.1"/>
    <property type="match status" value="1"/>
</dbReference>
<dbReference type="PANTHER" id="PTHR32057">
    <property type="entry name" value="PROTEIN ADENYLYLTRANSFERASE SELO, MITOCHONDRIAL"/>
    <property type="match status" value="1"/>
</dbReference>
<dbReference type="PANTHER" id="PTHR32057:SF14">
    <property type="entry name" value="PROTEIN ADENYLYLTRANSFERASE SELO, MITOCHONDRIAL"/>
    <property type="match status" value="1"/>
</dbReference>
<dbReference type="Pfam" id="PF02696">
    <property type="entry name" value="SelO"/>
    <property type="match status" value="1"/>
</dbReference>
<protein>
    <recommendedName>
        <fullName evidence="1">Protein nucleotidyltransferase YdiU</fullName>
        <ecNumber evidence="1">2.7.7.-</ecNumber>
    </recommendedName>
    <alternativeName>
        <fullName evidence="1">Protein adenylyltransferase YdiU</fullName>
        <ecNumber evidence="1">2.7.7.108</ecNumber>
    </alternativeName>
    <alternativeName>
        <fullName evidence="1">Protein uridylyltransferase YdiU</fullName>
        <ecNumber evidence="1">2.7.7.-</ecNumber>
    </alternativeName>
</protein>
<reference key="1">
    <citation type="journal article" date="2003" name="Nat. Genet.">
        <title>Comparative analysis of the genome sequences of Bordetella pertussis, Bordetella parapertussis and Bordetella bronchiseptica.</title>
        <authorList>
            <person name="Parkhill J."/>
            <person name="Sebaihia M."/>
            <person name="Preston A."/>
            <person name="Murphy L.D."/>
            <person name="Thomson N.R."/>
            <person name="Harris D.E."/>
            <person name="Holden M.T.G."/>
            <person name="Churcher C.M."/>
            <person name="Bentley S.D."/>
            <person name="Mungall K.L."/>
            <person name="Cerdeno-Tarraga A.-M."/>
            <person name="Temple L."/>
            <person name="James K.D."/>
            <person name="Harris B."/>
            <person name="Quail M.A."/>
            <person name="Achtman M."/>
            <person name="Atkin R."/>
            <person name="Baker S."/>
            <person name="Basham D."/>
            <person name="Bason N."/>
            <person name="Cherevach I."/>
            <person name="Chillingworth T."/>
            <person name="Collins M."/>
            <person name="Cronin A."/>
            <person name="Davis P."/>
            <person name="Doggett J."/>
            <person name="Feltwell T."/>
            <person name="Goble A."/>
            <person name="Hamlin N."/>
            <person name="Hauser H."/>
            <person name="Holroyd S."/>
            <person name="Jagels K."/>
            <person name="Leather S."/>
            <person name="Moule S."/>
            <person name="Norberczak H."/>
            <person name="O'Neil S."/>
            <person name="Ormond D."/>
            <person name="Price C."/>
            <person name="Rabbinowitsch E."/>
            <person name="Rutter S."/>
            <person name="Sanders M."/>
            <person name="Saunders D."/>
            <person name="Seeger K."/>
            <person name="Sharp S."/>
            <person name="Simmonds M."/>
            <person name="Skelton J."/>
            <person name="Squares R."/>
            <person name="Squares S."/>
            <person name="Stevens K."/>
            <person name="Unwin L."/>
            <person name="Whitehead S."/>
            <person name="Barrell B.G."/>
            <person name="Maskell D.J."/>
        </authorList>
    </citation>
    <scope>NUCLEOTIDE SEQUENCE [LARGE SCALE GENOMIC DNA]</scope>
    <source>
        <strain>ATCC BAA-588 / NCTC 13252 / RB50</strain>
    </source>
</reference>
<keyword id="KW-0067">ATP-binding</keyword>
<keyword id="KW-0460">Magnesium</keyword>
<keyword id="KW-0464">Manganese</keyword>
<keyword id="KW-0479">Metal-binding</keyword>
<keyword id="KW-0547">Nucleotide-binding</keyword>
<keyword id="KW-0548">Nucleotidyltransferase</keyword>
<keyword id="KW-0808">Transferase</keyword>
<name>SELO_BORBR</name>
<organism>
    <name type="scientific">Bordetella bronchiseptica (strain ATCC BAA-588 / NCTC 13252 / RB50)</name>
    <name type="common">Alcaligenes bronchisepticus</name>
    <dbReference type="NCBI Taxonomy" id="257310"/>
    <lineage>
        <taxon>Bacteria</taxon>
        <taxon>Pseudomonadati</taxon>
        <taxon>Pseudomonadota</taxon>
        <taxon>Betaproteobacteria</taxon>
        <taxon>Burkholderiales</taxon>
        <taxon>Alcaligenaceae</taxon>
        <taxon>Bordetella</taxon>
    </lineage>
</organism>
<sequence length="495" mass="54110">MKWLRLQDLPTDNSFAALPAEFYTRLQPRPPAAPRLLHANAEAAALIGLDPAEFSTQAFLDVFSGHAPLPGGDTLAAVYSGHQFGVWAGQLGDGRAHLLGEVRGPAGGWELQLKGAGMTPYSRMGDGRAVLRSSVREYLASEAMHGLGIPTTRSLALVVSDDPVMRETVETAAVVTRMAPSFVRFGSFEHWSARRQPEQLRVLADYVIDRFYPECRVAGAGRLDGEHGEILGLLAAVTRRTALLMADWQAVGFCHGVMNTDNMSILGLTLDYGPYGFMDTFQLGHICNHSDSEGRYAWNRQPSVGLWNLYRLASSLHTLAPDPEALRAVLDGYEAVFTQAFHGRMAGKLGLPQFLPEDETLLDDLLQLMHQQGADFTLAFRRLGEAVRGQRQPFEDLFIDRAAAGAWYDRLAARHASDGRAAQARAAAMDEVNPLYVLRNHLAEQAIRAAARGDAGEIDILLKLLRNPYKQQPGYDAYAGLAPDWAAGLEVSCSS</sequence>
<evidence type="ECO:0000255" key="1">
    <source>
        <dbReference type="HAMAP-Rule" id="MF_00692"/>
    </source>
</evidence>
<gene>
    <name evidence="1" type="primary">ydiU</name>
    <name evidence="1" type="synonym">selO</name>
    <name type="ordered locus">BB2107</name>
</gene>
<accession>Q7WKJ9</accession>
<proteinExistence type="inferred from homology"/>